<sequence length="245" mass="26985">MSEWSRIAVEFGEQQLNLTELEDFARELAYEGLDPALIIKKLKETGGDDWVKDTKFIIVFALTRGNKIVKASGKMSNSGSKRLMALQEKYGLVERAETRLSITPVRVAQSLPTWTCAAAAALKEYLPVGPAVMNLKVENYPPEMMCMAFGSLIPTAGVSEATTKTLMEAYSLWQDAFTKTINVKMRGASKTEVYNSFRDPLHAAVNSVFFPNDVRVKWLKAKGILGPDGVPSRAAEVAAAAYRNL</sequence>
<comment type="function">
    <text evidence="1 2 3">Encapsidates the genomic RNA, protecting it from nucleases. Displays high affinity for single-stranded nucleic acid. The encapsidated genomic RNA is termed the nucleocapsid (NC) or ribonucleoprotein (By similarity). The ribonucleoprotein has a non-helical structure (By similarity). Serves as template for viral transcription and replication. After replication, the nucleocapsid is recruited to the host Golgi apparatus by glycoprotein Gn for packaging into virus particles (By similarity).</text>
</comment>
<comment type="subunit">
    <text evidence="1 3 4 5">Homodimer (By similarity). Homohexamer; ring-shaped, necessary to form the nucleocapsid (PubMed:23576501). Homopentamers; opened pentamers in solution (By similarity). Binds to viral genomic RNA (By similarity). Interacts with glycoprotein Gn; this interaction allows packaging of nucleocapsids into virions (By similarity).</text>
</comment>
<comment type="subcellular location">
    <subcellularLocation>
        <location evidence="1">Virion</location>
    </subcellularLocation>
    <subcellularLocation>
        <location evidence="1">Host cytoplasm</location>
    </subcellularLocation>
    <subcellularLocation>
        <location evidence="1">Host nucleus</location>
    </subcellularLocation>
    <subcellularLocation>
        <location evidence="6 7">Host endoplasmic reticulum-Golgi intermediate compartment</location>
    </subcellularLocation>
    <subcellularLocation>
        <location evidence="6 7">Host Golgi apparatus</location>
    </subcellularLocation>
</comment>
<comment type="domain">
    <text evidence="4">The N-terminus is involved in homooligomerization.</text>
</comment>
<comment type="miscellaneous">
    <text evidence="5">Binds suramin, which inhibits the replication of SFTSV in vitro.</text>
</comment>
<comment type="similarity">
    <text evidence="8">Belongs to the phlebovirus nucleocapsid protein family.</text>
</comment>
<name>NCAP_SFTS</name>
<proteinExistence type="evidence at protein level"/>
<accession>I6WJ72</accession>
<dbReference type="EMBL" id="JQ317177">
    <property type="protein sequence ID" value="AFN26700.1"/>
    <property type="molecule type" value="Genomic_RNA"/>
</dbReference>
<dbReference type="PDB" id="4J4R">
    <property type="method" value="X-ray"/>
    <property type="resolution" value="1.90 A"/>
    <property type="chains" value="A=1-245"/>
</dbReference>
<dbReference type="PDB" id="4J4S">
    <property type="method" value="X-ray"/>
    <property type="resolution" value="2.44 A"/>
    <property type="chains" value="A/B/C/D=1-245"/>
</dbReference>
<dbReference type="PDB" id="4J4U">
    <property type="method" value="X-ray"/>
    <property type="resolution" value="2.80 A"/>
    <property type="chains" value="A/B/C/D/E=1-245"/>
</dbReference>
<dbReference type="PDB" id="4J4V">
    <property type="method" value="X-ray"/>
    <property type="resolution" value="2.30 A"/>
    <property type="chains" value="A/B/C/D/E=1-245"/>
</dbReference>
<dbReference type="PDBsum" id="4J4R"/>
<dbReference type="PDBsum" id="4J4S"/>
<dbReference type="PDBsum" id="4J4U"/>
<dbReference type="PDBsum" id="4J4V"/>
<dbReference type="SMR" id="I6WJ72"/>
<dbReference type="EvolutionaryTrace" id="I6WJ72"/>
<dbReference type="Proteomes" id="UP000144974">
    <property type="component" value="Genome"/>
</dbReference>
<dbReference type="GO" id="GO:0044172">
    <property type="term" value="C:host cell endoplasmic reticulum-Golgi intermediate compartment"/>
    <property type="evidence" value="ECO:0007669"/>
    <property type="project" value="UniProtKB-SubCell"/>
</dbReference>
<dbReference type="GO" id="GO:0044177">
    <property type="term" value="C:host cell Golgi apparatus"/>
    <property type="evidence" value="ECO:0007669"/>
    <property type="project" value="UniProtKB-SubCell"/>
</dbReference>
<dbReference type="GO" id="GO:0042025">
    <property type="term" value="C:host cell nucleus"/>
    <property type="evidence" value="ECO:0007669"/>
    <property type="project" value="UniProtKB-SubCell"/>
</dbReference>
<dbReference type="GO" id="GO:1990904">
    <property type="term" value="C:ribonucleoprotein complex"/>
    <property type="evidence" value="ECO:0007669"/>
    <property type="project" value="UniProtKB-KW"/>
</dbReference>
<dbReference type="GO" id="GO:0019013">
    <property type="term" value="C:viral nucleocapsid"/>
    <property type="evidence" value="ECO:0007669"/>
    <property type="project" value="UniProtKB-KW"/>
</dbReference>
<dbReference type="GO" id="GO:0003723">
    <property type="term" value="F:RNA binding"/>
    <property type="evidence" value="ECO:0007669"/>
    <property type="project" value="UniProtKB-KW"/>
</dbReference>
<dbReference type="InterPro" id="IPR009522">
    <property type="entry name" value="Capsid_Phlebovir/Tenuivir"/>
</dbReference>
<dbReference type="InterPro" id="IPR015971">
    <property type="entry name" value="Nucleocapsid_Phlebovirus"/>
</dbReference>
<dbReference type="Pfam" id="PF05733">
    <property type="entry name" value="Tenui_N"/>
    <property type="match status" value="1"/>
</dbReference>
<dbReference type="PIRSF" id="PIRSF003953">
    <property type="entry name" value="N_PhelboV"/>
    <property type="match status" value="1"/>
</dbReference>
<reference key="1">
    <citation type="submission" date="2011-12" db="EMBL/GenBank/DDBJ databases">
        <title>Genetic characteristics of novel Phlebovirus related to epidemic fever with thrombocytopenia syndrome in Jiangsu, China.</title>
        <authorList>
            <person name="Shan J."/>
            <person name="Qi X."/>
            <person name="Cui L."/>
            <person name="Zhao K."/>
            <person name="Guo X."/>
            <person name="Wu T."/>
            <person name="Peng H."/>
            <person name="Chen Y."/>
            <person name="Tang F."/>
            <person name="Zhou M."/>
            <person name="Wang H."/>
        </authorList>
    </citation>
    <scope>NUCLEOTIDE SEQUENCE [GENOMIC DNA]</scope>
    <source>
        <strain>Isolate JS2010-018</strain>
    </source>
</reference>
<reference key="2">
    <citation type="journal article" date="2018" name="Biomed. Res.">
        <title>Targeting of severe fever with thrombocytopenia syndrome virus structural proteins to the ERGIC (endoplasmic reticulum Golgi intermediate compartment) and Golgi complex.</title>
        <authorList>
            <person name="Lundu T."/>
            <person name="Tsuda Y."/>
            <person name="Ito R."/>
            <person name="Shimizu K."/>
            <person name="Kobayashi S."/>
            <person name="Yoshii K."/>
            <person name="Yoshimatsu K."/>
            <person name="Arikawa J."/>
            <person name="Kariwa H."/>
        </authorList>
    </citation>
    <scope>SUBCELLULAR LOCATION</scope>
    <source>
        <strain>YG1</strain>
    </source>
</reference>
<reference key="3">
    <citation type="journal article" date="2021" name="Sci. Rep.">
        <title>Subcellular localization of nucleocapsid protein of SFTSV and its assembly into the ribonucleoprotein complex with L protein and viral RNA.</title>
        <authorList>
            <person name="Lokupathirage S.M.W."/>
            <person name="Tsuda Y."/>
            <person name="Ikegame K."/>
            <person name="Noda K."/>
            <person name="Muthusinghe D.S."/>
            <person name="Kozawa F."/>
            <person name="Manzoor R."/>
            <person name="Shimizu K."/>
            <person name="Yoshimatsu K."/>
        </authorList>
    </citation>
    <scope>SUBCELLULAR LOCATION</scope>
    <scope>RNA-BINDING</scope>
    <source>
        <strain>YG1</strain>
    </source>
</reference>
<reference evidence="9 10" key="4">
    <citation type="journal article" date="2013" name="J. Virol.">
        <title>Structure of severe fever with thrombocytopenia syndrome virus nucleocapsid protein in complex with suramin reveals therapeutic potential.</title>
        <authorList>
            <person name="Jiao L."/>
            <person name="Ouyang S."/>
            <person name="Liang M."/>
            <person name="Niu F."/>
            <person name="Shaw N."/>
            <person name="Wu W."/>
            <person name="Ding W."/>
            <person name="Jin C."/>
            <person name="Peng Y."/>
            <person name="Zhu Y."/>
            <person name="Zhang F."/>
            <person name="Wang T."/>
            <person name="Li C."/>
            <person name="Zuo X."/>
            <person name="Luan C.H."/>
            <person name="Li D."/>
            <person name="Liu Z.J."/>
        </authorList>
    </citation>
    <scope>X-RAY CRYSTALLOGRAPHY (1.90 ANGSTROMS) IN COMPLEX WITH SURAMIN</scope>
    <scope>SUBUNIT</scope>
</reference>
<feature type="chain" id="PRO_0000456177" description="Nucleoprotein">
    <location>
        <begin position="1"/>
        <end position="245"/>
    </location>
</feature>
<feature type="binding site" evidence="4">
    <location>
        <position position="30"/>
    </location>
    <ligand>
        <name>RNA</name>
        <dbReference type="ChEBI" id="CHEBI:33697"/>
    </ligand>
</feature>
<feature type="binding site" evidence="4">
    <location>
        <position position="67"/>
    </location>
    <ligand>
        <name>RNA</name>
        <dbReference type="ChEBI" id="CHEBI:33697"/>
    </ligand>
</feature>
<feature type="binding site" evidence="4">
    <location>
        <position position="106"/>
    </location>
    <ligand>
        <name>RNA</name>
        <dbReference type="ChEBI" id="CHEBI:33697"/>
    </ligand>
</feature>
<feature type="binding site" evidence="4">
    <location>
        <position position="186"/>
    </location>
    <ligand>
        <name>RNA</name>
        <dbReference type="ChEBI" id="CHEBI:33697"/>
    </ligand>
</feature>
<feature type="binding site" evidence="4">
    <location>
        <position position="196"/>
    </location>
    <ligand>
        <name>RNA</name>
        <dbReference type="ChEBI" id="CHEBI:33697"/>
    </ligand>
</feature>
<feature type="site" description="RNA-binding" evidence="2">
    <location>
        <position position="64"/>
    </location>
</feature>
<feature type="site" description="RNA-binding" evidence="2">
    <location>
        <position position="67"/>
    </location>
</feature>
<feature type="site" description="RNA-binding" evidence="2">
    <location>
        <position position="70"/>
    </location>
</feature>
<feature type="site" description="RNA-binding" evidence="2">
    <location>
        <position position="95"/>
    </location>
</feature>
<feature type="site" description="RNA-binding" evidence="2">
    <location>
        <position position="106"/>
    </location>
</feature>
<feature type="site" description="RNA-binding" evidence="2">
    <location>
        <position position="184"/>
    </location>
</feature>
<feature type="helix" evidence="11">
    <location>
        <begin position="3"/>
        <end position="11"/>
    </location>
</feature>
<feature type="helix" evidence="11">
    <location>
        <begin position="18"/>
        <end position="28"/>
    </location>
</feature>
<feature type="helix" evidence="11">
    <location>
        <begin position="35"/>
        <end position="46"/>
    </location>
</feature>
<feature type="helix" evidence="11">
    <location>
        <begin position="47"/>
        <end position="49"/>
    </location>
</feature>
<feature type="helix" evidence="11">
    <location>
        <begin position="50"/>
        <end position="64"/>
    </location>
</feature>
<feature type="helix" evidence="11">
    <location>
        <begin position="68"/>
        <end position="73"/>
    </location>
</feature>
<feature type="helix" evidence="11">
    <location>
        <begin position="77"/>
        <end position="90"/>
    </location>
</feature>
<feature type="helix" evidence="11">
    <location>
        <begin position="104"/>
        <end position="110"/>
    </location>
</feature>
<feature type="helix" evidence="11">
    <location>
        <begin position="112"/>
        <end position="121"/>
    </location>
</feature>
<feature type="helix" evidence="11">
    <location>
        <begin position="123"/>
        <end position="125"/>
    </location>
</feature>
<feature type="strand" evidence="11">
    <location>
        <begin position="127"/>
        <end position="129"/>
    </location>
</feature>
<feature type="helix" evidence="11">
    <location>
        <begin position="130"/>
        <end position="136"/>
    </location>
</feature>
<feature type="strand" evidence="11">
    <location>
        <begin position="137"/>
        <end position="139"/>
    </location>
</feature>
<feature type="helix" evidence="11">
    <location>
        <begin position="142"/>
        <end position="144"/>
    </location>
</feature>
<feature type="helix" evidence="11">
    <location>
        <begin position="149"/>
        <end position="152"/>
    </location>
</feature>
<feature type="strand" evidence="11">
    <location>
        <begin position="155"/>
        <end position="158"/>
    </location>
</feature>
<feature type="helix" evidence="11">
    <location>
        <begin position="160"/>
        <end position="181"/>
    </location>
</feature>
<feature type="helix" evidence="11">
    <location>
        <begin position="183"/>
        <end position="185"/>
    </location>
</feature>
<feature type="helix" evidence="11">
    <location>
        <begin position="190"/>
        <end position="206"/>
    </location>
</feature>
<feature type="strand" evidence="11">
    <location>
        <begin position="208"/>
        <end position="210"/>
    </location>
</feature>
<feature type="helix" evidence="11">
    <location>
        <begin position="212"/>
        <end position="221"/>
    </location>
</feature>
<feature type="strand" evidence="11">
    <location>
        <begin position="229"/>
        <end position="231"/>
    </location>
</feature>
<feature type="helix" evidence="11">
    <location>
        <begin position="233"/>
        <end position="244"/>
    </location>
</feature>
<protein>
    <recommendedName>
        <fullName>Nucleoprotein</fullName>
    </recommendedName>
    <alternativeName>
        <fullName>Nucleocapsid protein</fullName>
        <shortName>Protein N</shortName>
    </alternativeName>
</protein>
<gene>
    <name type="primary">NP</name>
</gene>
<keyword id="KW-0002">3D-structure</keyword>
<keyword id="KW-0167">Capsid protein</keyword>
<keyword id="KW-1035">Host cytoplasm</keyword>
<keyword id="KW-1040">Host Golgi apparatus</keyword>
<keyword id="KW-1048">Host nucleus</keyword>
<keyword id="KW-0687">Ribonucleoprotein</keyword>
<keyword id="KW-0694">RNA-binding</keyword>
<keyword id="KW-0543">Viral nucleoprotein</keyword>
<keyword id="KW-0946">Virion</keyword>
<organism>
    <name type="scientific">Dabie bandavirus</name>
    <name type="common">Severe fever with thrombocytopenia virus</name>
    <name type="synonym">Huaiyangshan banyangvirus</name>
    <dbReference type="NCBI Taxonomy" id="1003835"/>
    <lineage>
        <taxon>Viruses</taxon>
        <taxon>Riboviria</taxon>
        <taxon>Orthornavirae</taxon>
        <taxon>Negarnaviricota</taxon>
        <taxon>Polyploviricotina</taxon>
        <taxon>Ellioviricetes</taxon>
        <taxon>Bunyavirales</taxon>
        <taxon>Phenuiviridae</taxon>
        <taxon>Bandavirus</taxon>
        <taxon>Bandavirus dabieense</taxon>
    </lineage>
</organism>
<evidence type="ECO:0000250" key="1">
    <source>
        <dbReference type="UniProtKB" id="D3K5I7"/>
    </source>
</evidence>
<evidence type="ECO:0000250" key="2">
    <source>
        <dbReference type="UniProtKB" id="F1BA48"/>
    </source>
</evidence>
<evidence type="ECO:0000250" key="3">
    <source>
        <dbReference type="UniProtKB" id="P21700"/>
    </source>
</evidence>
<evidence type="ECO:0000250" key="4">
    <source>
        <dbReference type="UniProtKB" id="P21701"/>
    </source>
</evidence>
<evidence type="ECO:0000269" key="5">
    <source>
    </source>
</evidence>
<evidence type="ECO:0000269" key="6">
    <source>
    </source>
</evidence>
<evidence type="ECO:0000269" key="7">
    <source>
    </source>
</evidence>
<evidence type="ECO:0000305" key="8"/>
<evidence type="ECO:0007744" key="9">
    <source>
        <dbReference type="PDB" id="4J4R"/>
    </source>
</evidence>
<evidence type="ECO:0007744" key="10">
    <source>
        <dbReference type="PDB" id="4J4S"/>
    </source>
</evidence>
<evidence type="ECO:0007829" key="11">
    <source>
        <dbReference type="PDB" id="4J4R"/>
    </source>
</evidence>